<accession>Q5FL81</accession>
<sequence length="543" mass="60616">MNTIIMIPVATAIVSLLVGTVTGYAIRKHSWEQKAQNAQNDADHILADAKAQVAAAEAEVNAQKQAAIAVKQSAENTKKEKILEAQEQIRDYRQKTEDELNSKKDNLARQENRLQQREDTLDHKNSLLDEREAGLTEKEDQLKQQNASLKAKLDEADELVGIRRQKLYDVAKLDKDQAKKIVLDQLSDELVKERAEMIRNSNEEVMAKADRYANQVIIDAIQSSAADTVAETTVSVVDLPNEEMKGRIIGREGRNIRSFEALTGIDLIIDDTPKVVTLSGFDPIRREIAKRAMERLIKDGRIHPARIEEMVDKARKEVNDDIYEAGESALMELGIHRMNPELVKTLGRLKYHTSYGQNVLSHSIEVGKLAGTMAAELGLDEKLAVRAGLLHDIGKAIDHDIEGSHVEIGVELTRKYHEPDVVVNAIAAHHGDVPKLSFIAELVVAADTISSARPGARSESLENYIRRLTDLEKIAKSYQGVKQAYAIQAGREVRVMVEPDEISDDRTVILARDIRNQVEKELDYPGNIKITVIREKRVVAIAK</sequence>
<organism>
    <name type="scientific">Lactobacillus acidophilus (strain ATCC 700396 / NCK56 / N2 / NCFM)</name>
    <dbReference type="NCBI Taxonomy" id="272621"/>
    <lineage>
        <taxon>Bacteria</taxon>
        <taxon>Bacillati</taxon>
        <taxon>Bacillota</taxon>
        <taxon>Bacilli</taxon>
        <taxon>Lactobacillales</taxon>
        <taxon>Lactobacillaceae</taxon>
        <taxon>Lactobacillus</taxon>
    </lineage>
</organism>
<keyword id="KW-1003">Cell membrane</keyword>
<keyword id="KW-0255">Endonuclease</keyword>
<keyword id="KW-0378">Hydrolase</keyword>
<keyword id="KW-0472">Membrane</keyword>
<keyword id="KW-0540">Nuclease</keyword>
<keyword id="KW-1185">Reference proteome</keyword>
<keyword id="KW-0694">RNA-binding</keyword>
<keyword id="KW-0812">Transmembrane</keyword>
<keyword id="KW-1133">Transmembrane helix</keyword>
<feature type="chain" id="PRO_0000344888" description="Ribonuclease Y">
    <location>
        <begin position="1"/>
        <end position="543"/>
    </location>
</feature>
<feature type="transmembrane region" description="Helical" evidence="1">
    <location>
        <begin position="4"/>
        <end position="24"/>
    </location>
</feature>
<feature type="domain" description="KH" evidence="1">
    <location>
        <begin position="233"/>
        <end position="296"/>
    </location>
</feature>
<feature type="domain" description="HD" evidence="2">
    <location>
        <begin position="359"/>
        <end position="452"/>
    </location>
</feature>
<evidence type="ECO:0000255" key="1">
    <source>
        <dbReference type="HAMAP-Rule" id="MF_00335"/>
    </source>
</evidence>
<evidence type="ECO:0000255" key="2">
    <source>
        <dbReference type="PROSITE-ProRule" id="PRU01175"/>
    </source>
</evidence>
<protein>
    <recommendedName>
        <fullName evidence="1">Ribonuclease Y</fullName>
        <shortName evidence="1">RNase Y</shortName>
        <ecNumber evidence="1">3.1.-.-</ecNumber>
    </recommendedName>
</protein>
<name>RNY_LACAC</name>
<gene>
    <name evidence="1" type="primary">rny</name>
    <name type="ordered locus">LBA0667</name>
</gene>
<comment type="function">
    <text evidence="1">Endoribonuclease that initiates mRNA decay.</text>
</comment>
<comment type="subcellular location">
    <subcellularLocation>
        <location evidence="1">Cell membrane</location>
        <topology evidence="1">Single-pass membrane protein</topology>
    </subcellularLocation>
</comment>
<comment type="similarity">
    <text evidence="1">Belongs to the RNase Y family.</text>
</comment>
<dbReference type="EC" id="3.1.-.-" evidence="1"/>
<dbReference type="EMBL" id="CP000033">
    <property type="protein sequence ID" value="AAV42543.1"/>
    <property type="molecule type" value="Genomic_DNA"/>
</dbReference>
<dbReference type="RefSeq" id="WP_011254219.1">
    <property type="nucleotide sequence ID" value="NC_006814.3"/>
</dbReference>
<dbReference type="RefSeq" id="YP_193574.1">
    <property type="nucleotide sequence ID" value="NC_006814.3"/>
</dbReference>
<dbReference type="SMR" id="Q5FL81"/>
<dbReference type="STRING" id="272621.LBA0667"/>
<dbReference type="KEGG" id="lac:LBA0667"/>
<dbReference type="PATRIC" id="fig|272621.13.peg.637"/>
<dbReference type="eggNOG" id="COG1418">
    <property type="taxonomic scope" value="Bacteria"/>
</dbReference>
<dbReference type="HOGENOM" id="CLU_028328_1_0_9"/>
<dbReference type="OrthoDB" id="9803205at2"/>
<dbReference type="BioCyc" id="LACI272621:G1G49-689-MONOMER"/>
<dbReference type="Proteomes" id="UP000006381">
    <property type="component" value="Chromosome"/>
</dbReference>
<dbReference type="GO" id="GO:0005886">
    <property type="term" value="C:plasma membrane"/>
    <property type="evidence" value="ECO:0007669"/>
    <property type="project" value="UniProtKB-SubCell"/>
</dbReference>
<dbReference type="GO" id="GO:0003723">
    <property type="term" value="F:RNA binding"/>
    <property type="evidence" value="ECO:0007669"/>
    <property type="project" value="UniProtKB-UniRule"/>
</dbReference>
<dbReference type="GO" id="GO:0004521">
    <property type="term" value="F:RNA endonuclease activity"/>
    <property type="evidence" value="ECO:0007669"/>
    <property type="project" value="UniProtKB-UniRule"/>
</dbReference>
<dbReference type="GO" id="GO:0006402">
    <property type="term" value="P:mRNA catabolic process"/>
    <property type="evidence" value="ECO:0007669"/>
    <property type="project" value="UniProtKB-UniRule"/>
</dbReference>
<dbReference type="CDD" id="cd00077">
    <property type="entry name" value="HDc"/>
    <property type="match status" value="1"/>
</dbReference>
<dbReference type="CDD" id="cd22431">
    <property type="entry name" value="KH-I_RNaseY"/>
    <property type="match status" value="1"/>
</dbReference>
<dbReference type="Gene3D" id="1.10.3210.10">
    <property type="entry name" value="Hypothetical protein af1432"/>
    <property type="match status" value="1"/>
</dbReference>
<dbReference type="Gene3D" id="3.30.1370.10">
    <property type="entry name" value="K Homology domain, type 1"/>
    <property type="match status" value="1"/>
</dbReference>
<dbReference type="HAMAP" id="MF_00335">
    <property type="entry name" value="RNase_Y"/>
    <property type="match status" value="1"/>
</dbReference>
<dbReference type="InterPro" id="IPR003607">
    <property type="entry name" value="HD/PDEase_dom"/>
</dbReference>
<dbReference type="InterPro" id="IPR006674">
    <property type="entry name" value="HD_domain"/>
</dbReference>
<dbReference type="InterPro" id="IPR006675">
    <property type="entry name" value="HDIG_dom"/>
</dbReference>
<dbReference type="InterPro" id="IPR004087">
    <property type="entry name" value="KH_dom"/>
</dbReference>
<dbReference type="InterPro" id="IPR004088">
    <property type="entry name" value="KH_dom_type_1"/>
</dbReference>
<dbReference type="InterPro" id="IPR036612">
    <property type="entry name" value="KH_dom_type_1_sf"/>
</dbReference>
<dbReference type="InterPro" id="IPR017705">
    <property type="entry name" value="Ribonuclease_Y"/>
</dbReference>
<dbReference type="InterPro" id="IPR022711">
    <property type="entry name" value="RNase_Y_N"/>
</dbReference>
<dbReference type="NCBIfam" id="TIGR00277">
    <property type="entry name" value="HDIG"/>
    <property type="match status" value="1"/>
</dbReference>
<dbReference type="NCBIfam" id="TIGR03319">
    <property type="entry name" value="RNase_Y"/>
    <property type="match status" value="1"/>
</dbReference>
<dbReference type="PANTHER" id="PTHR12826">
    <property type="entry name" value="RIBONUCLEASE Y"/>
    <property type="match status" value="1"/>
</dbReference>
<dbReference type="PANTHER" id="PTHR12826:SF15">
    <property type="entry name" value="RIBONUCLEASE Y"/>
    <property type="match status" value="1"/>
</dbReference>
<dbReference type="Pfam" id="PF01966">
    <property type="entry name" value="HD"/>
    <property type="match status" value="1"/>
</dbReference>
<dbReference type="Pfam" id="PF00013">
    <property type="entry name" value="KH_1"/>
    <property type="match status" value="1"/>
</dbReference>
<dbReference type="Pfam" id="PF12072">
    <property type="entry name" value="RNase_Y_N"/>
    <property type="match status" value="1"/>
</dbReference>
<dbReference type="SMART" id="SM00471">
    <property type="entry name" value="HDc"/>
    <property type="match status" value="1"/>
</dbReference>
<dbReference type="SMART" id="SM00322">
    <property type="entry name" value="KH"/>
    <property type="match status" value="1"/>
</dbReference>
<dbReference type="SUPFAM" id="SSF54791">
    <property type="entry name" value="Eukaryotic type KH-domain (KH-domain type I)"/>
    <property type="match status" value="1"/>
</dbReference>
<dbReference type="SUPFAM" id="SSF109604">
    <property type="entry name" value="HD-domain/PDEase-like"/>
    <property type="match status" value="1"/>
</dbReference>
<dbReference type="PROSITE" id="PS51831">
    <property type="entry name" value="HD"/>
    <property type="match status" value="1"/>
</dbReference>
<dbReference type="PROSITE" id="PS50084">
    <property type="entry name" value="KH_TYPE_1"/>
    <property type="match status" value="1"/>
</dbReference>
<reference key="1">
    <citation type="journal article" date="2005" name="Proc. Natl. Acad. Sci. U.S.A.">
        <title>Complete genome sequence of the probiotic lactic acid bacterium Lactobacillus acidophilus NCFM.</title>
        <authorList>
            <person name="Altermann E."/>
            <person name="Russell W.M."/>
            <person name="Azcarate-Peril M.A."/>
            <person name="Barrangou R."/>
            <person name="Buck B.L."/>
            <person name="McAuliffe O."/>
            <person name="Souther N."/>
            <person name="Dobson A."/>
            <person name="Duong T."/>
            <person name="Callanan M."/>
            <person name="Lick S."/>
            <person name="Hamrick A."/>
            <person name="Cano R."/>
            <person name="Klaenhammer T.R."/>
        </authorList>
    </citation>
    <scope>NUCLEOTIDE SEQUENCE [LARGE SCALE GENOMIC DNA]</scope>
    <source>
        <strain>ATCC 700396 / NCK56 / N2 / NCFM</strain>
    </source>
</reference>
<proteinExistence type="inferred from homology"/>